<gene>
    <name evidence="1" type="primary">mscL</name>
    <name type="ordered locus">LCABL_27460</name>
</gene>
<sequence length="123" mass="13531">MLKEFQKFIMRGNVLDLAVGVIIGSAFTGLVTSLTKNLINPILSMFAGKADLSGLYFTILGAKFTYGNFINDVLNFLIIAFVVFLLVKGINRILPSKPAKPAGPTQEELLTEIRDLLKQDQQV</sequence>
<accession>B3WAS8</accession>
<organism>
    <name type="scientific">Lacticaseibacillus casei (strain BL23)</name>
    <name type="common">Lactobacillus casei</name>
    <dbReference type="NCBI Taxonomy" id="543734"/>
    <lineage>
        <taxon>Bacteria</taxon>
        <taxon>Bacillati</taxon>
        <taxon>Bacillota</taxon>
        <taxon>Bacilli</taxon>
        <taxon>Lactobacillales</taxon>
        <taxon>Lactobacillaceae</taxon>
        <taxon>Lacticaseibacillus</taxon>
    </lineage>
</organism>
<comment type="function">
    <text evidence="1">Channel that opens in response to stretch forces in the membrane lipid bilayer. May participate in the regulation of osmotic pressure changes within the cell.</text>
</comment>
<comment type="subunit">
    <text evidence="1">Homopentamer.</text>
</comment>
<comment type="subcellular location">
    <subcellularLocation>
        <location evidence="1">Cell membrane</location>
        <topology evidence="1">Multi-pass membrane protein</topology>
    </subcellularLocation>
</comment>
<comment type="similarity">
    <text evidence="1">Belongs to the MscL family.</text>
</comment>
<feature type="chain" id="PRO_1000094899" description="Large-conductance mechanosensitive channel">
    <location>
        <begin position="1"/>
        <end position="123"/>
    </location>
</feature>
<feature type="transmembrane region" description="Helical" evidence="1">
    <location>
        <begin position="14"/>
        <end position="34"/>
    </location>
</feature>
<feature type="transmembrane region" description="Helical" evidence="1">
    <location>
        <begin position="67"/>
        <end position="87"/>
    </location>
</feature>
<keyword id="KW-1003">Cell membrane</keyword>
<keyword id="KW-0407">Ion channel</keyword>
<keyword id="KW-0406">Ion transport</keyword>
<keyword id="KW-0472">Membrane</keyword>
<keyword id="KW-0812">Transmembrane</keyword>
<keyword id="KW-1133">Transmembrane helix</keyword>
<keyword id="KW-0813">Transport</keyword>
<reference key="1">
    <citation type="submission" date="2008-06" db="EMBL/GenBank/DDBJ databases">
        <title>Lactobacillus casei BL23 complete genome sequence.</title>
        <authorList>
            <person name="Maze A."/>
            <person name="Boel G."/>
            <person name="Bourand A."/>
            <person name="Loux V."/>
            <person name="Gibrat J.F."/>
            <person name="Zuniga M."/>
            <person name="Hartke A."/>
            <person name="Deutscher J."/>
        </authorList>
    </citation>
    <scope>NUCLEOTIDE SEQUENCE [LARGE SCALE GENOMIC DNA]</scope>
    <source>
        <strain>BL23</strain>
    </source>
</reference>
<proteinExistence type="inferred from homology"/>
<evidence type="ECO:0000255" key="1">
    <source>
        <dbReference type="HAMAP-Rule" id="MF_00115"/>
    </source>
</evidence>
<name>MSCL_LACCB</name>
<dbReference type="EMBL" id="FM177140">
    <property type="protein sequence ID" value="CAQ67797.1"/>
    <property type="molecule type" value="Genomic_DNA"/>
</dbReference>
<dbReference type="SMR" id="B3WAS8"/>
<dbReference type="KEGG" id="lcb:LCABL_27460"/>
<dbReference type="HOGENOM" id="CLU_095787_0_0_9"/>
<dbReference type="GO" id="GO:0005886">
    <property type="term" value="C:plasma membrane"/>
    <property type="evidence" value="ECO:0007669"/>
    <property type="project" value="UniProtKB-SubCell"/>
</dbReference>
<dbReference type="GO" id="GO:0008381">
    <property type="term" value="F:mechanosensitive monoatomic ion channel activity"/>
    <property type="evidence" value="ECO:0007669"/>
    <property type="project" value="UniProtKB-UniRule"/>
</dbReference>
<dbReference type="Gene3D" id="1.10.1200.120">
    <property type="entry name" value="Large-conductance mechanosensitive channel, MscL, domain 1"/>
    <property type="match status" value="1"/>
</dbReference>
<dbReference type="HAMAP" id="MF_00115">
    <property type="entry name" value="MscL"/>
    <property type="match status" value="1"/>
</dbReference>
<dbReference type="InterPro" id="IPR019823">
    <property type="entry name" value="Mechanosensitive_channel_CS"/>
</dbReference>
<dbReference type="InterPro" id="IPR001185">
    <property type="entry name" value="MS_channel"/>
</dbReference>
<dbReference type="InterPro" id="IPR037673">
    <property type="entry name" value="MSC/AndL"/>
</dbReference>
<dbReference type="InterPro" id="IPR036019">
    <property type="entry name" value="MscL_channel"/>
</dbReference>
<dbReference type="NCBIfam" id="TIGR00220">
    <property type="entry name" value="mscL"/>
    <property type="match status" value="1"/>
</dbReference>
<dbReference type="NCBIfam" id="NF001842">
    <property type="entry name" value="PRK00567.1-3"/>
    <property type="match status" value="1"/>
</dbReference>
<dbReference type="PANTHER" id="PTHR30266:SF2">
    <property type="entry name" value="LARGE-CONDUCTANCE MECHANOSENSITIVE CHANNEL"/>
    <property type="match status" value="1"/>
</dbReference>
<dbReference type="PANTHER" id="PTHR30266">
    <property type="entry name" value="MECHANOSENSITIVE CHANNEL MSCL"/>
    <property type="match status" value="1"/>
</dbReference>
<dbReference type="Pfam" id="PF01741">
    <property type="entry name" value="MscL"/>
    <property type="match status" value="1"/>
</dbReference>
<dbReference type="PRINTS" id="PR01264">
    <property type="entry name" value="MECHCHANNEL"/>
</dbReference>
<dbReference type="SUPFAM" id="SSF81330">
    <property type="entry name" value="Gated mechanosensitive channel"/>
    <property type="match status" value="1"/>
</dbReference>
<dbReference type="PROSITE" id="PS01327">
    <property type="entry name" value="MSCL"/>
    <property type="match status" value="1"/>
</dbReference>
<protein>
    <recommendedName>
        <fullName evidence="1">Large-conductance mechanosensitive channel</fullName>
    </recommendedName>
</protein>